<sequence length="185" mass="19075">MSAFGFPGGGAPTPPQGSFWDMTPEQQGMYSANLIMGTMQSCPGKSVMAGVTGFGLGGVFGLFMASMAYDAPVGMGVQTMSDLPFKQQMKIQFTDMGKRAWSSAKNFGFIGGVFSGTECCIESLRAKNDIWNGVAAGCLTGGGLAVKAGPQAALVGCAGFAAFSAAIDVYMRSDNKAPPSTDEDL</sequence>
<comment type="function">
    <text evidence="2">Essential core component of the TIM22 complex, a complex that mediates the import and insertion of multi-pass transmembrane proteins into the mitochondrial inner membrane. In the TIM22 complex, it constitutes the voltage-activated and signal-gated channel. Forms a twin-pore translocase that uses the membrane potential as external driving force in 2 voltage-dependent steps (By similarity).</text>
</comment>
<comment type="subunit">
    <text evidence="2">Component of the TIM22 complex, whose core is composed of TIM22 and TIM54, associated with the 70 kDa heterohexamer composed of TIM9 and TIM10 (or TIM8 and TIM13).</text>
</comment>
<comment type="subcellular location">
    <subcellularLocation>
        <location evidence="2">Mitochondrion inner membrane</location>
        <topology evidence="3">Multi-pass membrane protein</topology>
    </subcellularLocation>
</comment>
<comment type="similarity">
    <text evidence="4">Belongs to the Tim17/Tim22/Tim23 family.</text>
</comment>
<comment type="sequence caution" evidence="4">
    <conflict type="erroneous initiation">
        <sequence resource="EMBL-CDS" id="CAG78841"/>
    </conflict>
</comment>
<dbReference type="EMBL" id="CR382132">
    <property type="protein sequence ID" value="CAG78841.2"/>
    <property type="status" value="ALT_INIT"/>
    <property type="molecule type" value="Genomic_DNA"/>
</dbReference>
<dbReference type="RefSeq" id="XP_506028.2">
    <property type="nucleotide sequence ID" value="XM_506028.2"/>
</dbReference>
<dbReference type="SMR" id="Q6BZY4"/>
<dbReference type="FunCoup" id="Q6BZY4">
    <property type="interactions" value="671"/>
</dbReference>
<dbReference type="STRING" id="284591.Q6BZY4"/>
<dbReference type="KEGG" id="yli:2908292"/>
<dbReference type="InParanoid" id="Q6BZY4"/>
<dbReference type="OrthoDB" id="117867at4891"/>
<dbReference type="Proteomes" id="UP000001300">
    <property type="component" value="Chromosome F"/>
</dbReference>
<dbReference type="GO" id="GO:0042721">
    <property type="term" value="C:TIM22 mitochondrial import inner membrane insertion complex"/>
    <property type="evidence" value="ECO:0000318"/>
    <property type="project" value="GO_Central"/>
</dbReference>
<dbReference type="GO" id="GO:0030943">
    <property type="term" value="F:mitochondrion targeting sequence binding"/>
    <property type="evidence" value="ECO:0000318"/>
    <property type="project" value="GO_Central"/>
</dbReference>
<dbReference type="GO" id="GO:0008320">
    <property type="term" value="F:protein transmembrane transporter activity"/>
    <property type="evidence" value="ECO:0000318"/>
    <property type="project" value="GO_Central"/>
</dbReference>
<dbReference type="GO" id="GO:0045039">
    <property type="term" value="P:protein insertion into mitochondrial inner membrane"/>
    <property type="evidence" value="ECO:0000318"/>
    <property type="project" value="GO_Central"/>
</dbReference>
<dbReference type="InterPro" id="IPR039175">
    <property type="entry name" value="TIM22"/>
</dbReference>
<dbReference type="PANTHER" id="PTHR14110">
    <property type="entry name" value="MITOCHONDRIAL IMPORT INNER MEMBRANE TRANSLOCASE SUBUNIT TIM22"/>
    <property type="match status" value="1"/>
</dbReference>
<dbReference type="PANTHER" id="PTHR14110:SF0">
    <property type="entry name" value="MITOCHONDRIAL IMPORT INNER MEMBRANE TRANSLOCASE SUBUNIT TIM22"/>
    <property type="match status" value="1"/>
</dbReference>
<dbReference type="Pfam" id="PF02466">
    <property type="entry name" value="Tim17"/>
    <property type="match status" value="1"/>
</dbReference>
<protein>
    <recommendedName>
        <fullName>Mitochondrial import inner membrane translocase subunit TIM22</fullName>
    </recommendedName>
</protein>
<evidence type="ECO:0000250" key="1">
    <source>
        <dbReference type="UniProtKB" id="A0A1D8PI78"/>
    </source>
</evidence>
<evidence type="ECO:0000250" key="2">
    <source>
        <dbReference type="UniProtKB" id="Q12328"/>
    </source>
</evidence>
<evidence type="ECO:0000255" key="3"/>
<evidence type="ECO:0000305" key="4"/>
<organism>
    <name type="scientific">Yarrowia lipolytica (strain CLIB 122 / E 150)</name>
    <name type="common">Yeast</name>
    <name type="synonym">Candida lipolytica</name>
    <dbReference type="NCBI Taxonomy" id="284591"/>
    <lineage>
        <taxon>Eukaryota</taxon>
        <taxon>Fungi</taxon>
        <taxon>Dikarya</taxon>
        <taxon>Ascomycota</taxon>
        <taxon>Saccharomycotina</taxon>
        <taxon>Dipodascomycetes</taxon>
        <taxon>Dipodascales</taxon>
        <taxon>Dipodascales incertae sedis</taxon>
        <taxon>Yarrowia</taxon>
    </lineage>
</organism>
<keyword id="KW-1015">Disulfide bond</keyword>
<keyword id="KW-0472">Membrane</keyword>
<keyword id="KW-0496">Mitochondrion</keyword>
<keyword id="KW-0999">Mitochondrion inner membrane</keyword>
<keyword id="KW-0653">Protein transport</keyword>
<keyword id="KW-1185">Reference proteome</keyword>
<keyword id="KW-0811">Translocation</keyword>
<keyword id="KW-0812">Transmembrane</keyword>
<keyword id="KW-1133">Transmembrane helix</keyword>
<keyword id="KW-0813">Transport</keyword>
<accession>Q6BZY4</accession>
<reference key="1">
    <citation type="journal article" date="2004" name="Nature">
        <title>Genome evolution in yeasts.</title>
        <authorList>
            <person name="Dujon B."/>
            <person name="Sherman D."/>
            <person name="Fischer G."/>
            <person name="Durrens P."/>
            <person name="Casaregola S."/>
            <person name="Lafontaine I."/>
            <person name="de Montigny J."/>
            <person name="Marck C."/>
            <person name="Neuveglise C."/>
            <person name="Talla E."/>
            <person name="Goffard N."/>
            <person name="Frangeul L."/>
            <person name="Aigle M."/>
            <person name="Anthouard V."/>
            <person name="Babour A."/>
            <person name="Barbe V."/>
            <person name="Barnay S."/>
            <person name="Blanchin S."/>
            <person name="Beckerich J.-M."/>
            <person name="Beyne E."/>
            <person name="Bleykasten C."/>
            <person name="Boisrame A."/>
            <person name="Boyer J."/>
            <person name="Cattolico L."/>
            <person name="Confanioleri F."/>
            <person name="de Daruvar A."/>
            <person name="Despons L."/>
            <person name="Fabre E."/>
            <person name="Fairhead C."/>
            <person name="Ferry-Dumazet H."/>
            <person name="Groppi A."/>
            <person name="Hantraye F."/>
            <person name="Hennequin C."/>
            <person name="Jauniaux N."/>
            <person name="Joyet P."/>
            <person name="Kachouri R."/>
            <person name="Kerrest A."/>
            <person name="Koszul R."/>
            <person name="Lemaire M."/>
            <person name="Lesur I."/>
            <person name="Ma L."/>
            <person name="Muller H."/>
            <person name="Nicaud J.-M."/>
            <person name="Nikolski M."/>
            <person name="Oztas S."/>
            <person name="Ozier-Kalogeropoulos O."/>
            <person name="Pellenz S."/>
            <person name="Potier S."/>
            <person name="Richard G.-F."/>
            <person name="Straub M.-L."/>
            <person name="Suleau A."/>
            <person name="Swennen D."/>
            <person name="Tekaia F."/>
            <person name="Wesolowski-Louvel M."/>
            <person name="Westhof E."/>
            <person name="Wirth B."/>
            <person name="Zeniou-Meyer M."/>
            <person name="Zivanovic Y."/>
            <person name="Bolotin-Fukuhara M."/>
            <person name="Thierry A."/>
            <person name="Bouchier C."/>
            <person name="Caudron B."/>
            <person name="Scarpelli C."/>
            <person name="Gaillardin C."/>
            <person name="Weissenbach J."/>
            <person name="Wincker P."/>
            <person name="Souciet J.-L."/>
        </authorList>
    </citation>
    <scope>NUCLEOTIDE SEQUENCE [LARGE SCALE GENOMIC DNA]</scope>
    <source>
        <strain>CLIB 122 / E 150</strain>
    </source>
</reference>
<feature type="chain" id="PRO_0000228093" description="Mitochondrial import inner membrane translocase subunit TIM22">
    <location>
        <begin position="1"/>
        <end position="185"/>
    </location>
</feature>
<feature type="transmembrane region" description="Helical" evidence="3">
    <location>
        <begin position="47"/>
        <end position="67"/>
    </location>
</feature>
<feature type="transmembrane region" description="Helical" evidence="3">
    <location>
        <begin position="130"/>
        <end position="150"/>
    </location>
</feature>
<feature type="transmembrane region" description="Helical" evidence="3">
    <location>
        <begin position="151"/>
        <end position="171"/>
    </location>
</feature>
<feature type="disulfide bond" evidence="1">
    <location>
        <begin position="42"/>
        <end position="119"/>
    </location>
</feature>
<feature type="disulfide bond" evidence="1">
    <location>
        <begin position="138"/>
        <end position="157"/>
    </location>
</feature>
<proteinExistence type="inferred from homology"/>
<gene>
    <name type="primary">TIM22</name>
    <name type="ordered locus">YALI0F29931g</name>
</gene>
<name>TIM22_YARLI</name>